<organism>
    <name type="scientific">Escherichia coli (strain K12 / DH10B)</name>
    <dbReference type="NCBI Taxonomy" id="316385"/>
    <lineage>
        <taxon>Bacteria</taxon>
        <taxon>Pseudomonadati</taxon>
        <taxon>Pseudomonadota</taxon>
        <taxon>Gammaproteobacteria</taxon>
        <taxon>Enterobacterales</taxon>
        <taxon>Enterobacteriaceae</taxon>
        <taxon>Escherichia</taxon>
    </lineage>
</organism>
<name>BETA_ECODH</name>
<keyword id="KW-0274">FAD</keyword>
<keyword id="KW-0285">Flavoprotein</keyword>
<keyword id="KW-0520">NAD</keyword>
<keyword id="KW-0560">Oxidoreductase</keyword>
<sequence>MQFDYIIIGAGSAGNVLATRLTEDPNTSVLLLEAGGPDYRFDFRTQMPAALAFPLQGKRYNWAYETEPEPFMNNRRMECGRGKGLGGSSLINGMCYIRGNALDLDNWAQEPGLENWSYLDCLPYYRKAETRDMGENDYHGGDGPVSVTTSKPGVNPLFEAMIEAGVQAGYPRTDDLNGYQQEGFGPMDRTVTPQGRRASTARGYLDQAKSRPNLTIRTHAMTDHIIFDGKRAVGVEWLEGDSTIPTRATANKEVLLCAGAIASPQILQRSGVGNAELLAEFDIPLVHELPGVGENLQDHLEMYLQYECKEPVSLYPALQWWNQPKIGAEWLFGGTGVGASNHFEAGGFIRSREEFAWPNIQYHFLPVAINYNGSNAVKEHGFQCHVGSMRSPSRGHVRIKSRDPHQHPAILFNYMSHEQDWQEFRDAIRITREIMHQPALDQYRGREISPGVECQTDEQLDEFVRNHAETAFHPCGTCKMGYDEMSVVDGEGRVHGLEGLRVVDASIMPQIITGNLNATTIMIGEKIADMIRGQEALPRSTAGYFVANGMPVRAKK</sequence>
<accession>B1XE52</accession>
<comment type="function">
    <text evidence="1">Involved in the biosynthesis of the osmoprotectant glycine betaine. Catalyzes the oxidation of choline to betaine aldehyde and betaine aldehyde to glycine betaine at the same rate.</text>
</comment>
<comment type="catalytic activity">
    <reaction evidence="1">
        <text>choline + A = betaine aldehyde + AH2</text>
        <dbReference type="Rhea" id="RHEA:17433"/>
        <dbReference type="ChEBI" id="CHEBI:13193"/>
        <dbReference type="ChEBI" id="CHEBI:15354"/>
        <dbReference type="ChEBI" id="CHEBI:15710"/>
        <dbReference type="ChEBI" id="CHEBI:17499"/>
        <dbReference type="EC" id="1.1.99.1"/>
    </reaction>
</comment>
<comment type="catalytic activity">
    <reaction evidence="1">
        <text>betaine aldehyde + NAD(+) + H2O = glycine betaine + NADH + 2 H(+)</text>
        <dbReference type="Rhea" id="RHEA:15305"/>
        <dbReference type="ChEBI" id="CHEBI:15377"/>
        <dbReference type="ChEBI" id="CHEBI:15378"/>
        <dbReference type="ChEBI" id="CHEBI:15710"/>
        <dbReference type="ChEBI" id="CHEBI:17750"/>
        <dbReference type="ChEBI" id="CHEBI:57540"/>
        <dbReference type="ChEBI" id="CHEBI:57945"/>
        <dbReference type="EC" id="1.2.1.8"/>
    </reaction>
</comment>
<comment type="cofactor">
    <cofactor evidence="1">
        <name>FAD</name>
        <dbReference type="ChEBI" id="CHEBI:57692"/>
    </cofactor>
</comment>
<comment type="pathway">
    <text evidence="1">Amine and polyamine biosynthesis; betaine biosynthesis via choline pathway; betaine aldehyde from choline (cytochrome c reductase route): step 1/1.</text>
</comment>
<comment type="similarity">
    <text evidence="1">Belongs to the GMC oxidoreductase family.</text>
</comment>
<evidence type="ECO:0000255" key="1">
    <source>
        <dbReference type="HAMAP-Rule" id="MF_00750"/>
    </source>
</evidence>
<proteinExistence type="inferred from homology"/>
<gene>
    <name evidence="1" type="primary">betA</name>
    <name type="ordered locus">ECDH10B_0298</name>
</gene>
<reference key="1">
    <citation type="journal article" date="2008" name="J. Bacteriol.">
        <title>The complete genome sequence of Escherichia coli DH10B: insights into the biology of a laboratory workhorse.</title>
        <authorList>
            <person name="Durfee T."/>
            <person name="Nelson R."/>
            <person name="Baldwin S."/>
            <person name="Plunkett G. III"/>
            <person name="Burland V."/>
            <person name="Mau B."/>
            <person name="Petrosino J.F."/>
            <person name="Qin X."/>
            <person name="Muzny D.M."/>
            <person name="Ayele M."/>
            <person name="Gibbs R.A."/>
            <person name="Csorgo B."/>
            <person name="Posfai G."/>
            <person name="Weinstock G.M."/>
            <person name="Blattner F.R."/>
        </authorList>
    </citation>
    <scope>NUCLEOTIDE SEQUENCE [LARGE SCALE GENOMIC DNA]</scope>
    <source>
        <strain>K12 / DH10B</strain>
    </source>
</reference>
<dbReference type="EC" id="1.1.99.1" evidence="1"/>
<dbReference type="EC" id="1.2.1.8" evidence="1"/>
<dbReference type="EMBL" id="CP000948">
    <property type="protein sequence ID" value="ACB01476.1"/>
    <property type="molecule type" value="Genomic_DNA"/>
</dbReference>
<dbReference type="RefSeq" id="WP_001159094.1">
    <property type="nucleotide sequence ID" value="NC_010473.1"/>
</dbReference>
<dbReference type="SMR" id="B1XE52"/>
<dbReference type="CAZy" id="AA3">
    <property type="family name" value="Auxiliary Activities 3"/>
</dbReference>
<dbReference type="KEGG" id="ecd:ECDH10B_0298"/>
<dbReference type="HOGENOM" id="CLU_002865_7_1_6"/>
<dbReference type="UniPathway" id="UPA00529">
    <property type="reaction ID" value="UER00385"/>
</dbReference>
<dbReference type="GO" id="GO:0016020">
    <property type="term" value="C:membrane"/>
    <property type="evidence" value="ECO:0007669"/>
    <property type="project" value="TreeGrafter"/>
</dbReference>
<dbReference type="GO" id="GO:0008802">
    <property type="term" value="F:betaine-aldehyde dehydrogenase (NAD+) activity"/>
    <property type="evidence" value="ECO:0007669"/>
    <property type="project" value="UniProtKB-EC"/>
</dbReference>
<dbReference type="GO" id="GO:0008812">
    <property type="term" value="F:choline dehydrogenase activity"/>
    <property type="evidence" value="ECO:0007669"/>
    <property type="project" value="UniProtKB-UniRule"/>
</dbReference>
<dbReference type="GO" id="GO:0050660">
    <property type="term" value="F:flavin adenine dinucleotide binding"/>
    <property type="evidence" value="ECO:0007669"/>
    <property type="project" value="InterPro"/>
</dbReference>
<dbReference type="GO" id="GO:0019285">
    <property type="term" value="P:glycine betaine biosynthetic process from choline"/>
    <property type="evidence" value="ECO:0007669"/>
    <property type="project" value="UniProtKB-UniRule"/>
</dbReference>
<dbReference type="Gene3D" id="3.50.50.60">
    <property type="entry name" value="FAD/NAD(P)-binding domain"/>
    <property type="match status" value="1"/>
</dbReference>
<dbReference type="Gene3D" id="3.30.560.10">
    <property type="entry name" value="Glucose Oxidase, domain 3"/>
    <property type="match status" value="1"/>
</dbReference>
<dbReference type="HAMAP" id="MF_00750">
    <property type="entry name" value="Choline_dehydrogen"/>
    <property type="match status" value="1"/>
</dbReference>
<dbReference type="InterPro" id="IPR011533">
    <property type="entry name" value="BetA"/>
</dbReference>
<dbReference type="InterPro" id="IPR036188">
    <property type="entry name" value="FAD/NAD-bd_sf"/>
</dbReference>
<dbReference type="InterPro" id="IPR012132">
    <property type="entry name" value="GMC_OxRdtase"/>
</dbReference>
<dbReference type="InterPro" id="IPR000172">
    <property type="entry name" value="GMC_OxRdtase_N"/>
</dbReference>
<dbReference type="InterPro" id="IPR007867">
    <property type="entry name" value="GMC_OxRtase_C"/>
</dbReference>
<dbReference type="NCBIfam" id="TIGR01810">
    <property type="entry name" value="betA"/>
    <property type="match status" value="1"/>
</dbReference>
<dbReference type="NCBIfam" id="NF002550">
    <property type="entry name" value="PRK02106.1"/>
    <property type="match status" value="1"/>
</dbReference>
<dbReference type="PANTHER" id="PTHR11552:SF147">
    <property type="entry name" value="CHOLINE DEHYDROGENASE, MITOCHONDRIAL"/>
    <property type="match status" value="1"/>
</dbReference>
<dbReference type="PANTHER" id="PTHR11552">
    <property type="entry name" value="GLUCOSE-METHANOL-CHOLINE GMC OXIDOREDUCTASE"/>
    <property type="match status" value="1"/>
</dbReference>
<dbReference type="Pfam" id="PF05199">
    <property type="entry name" value="GMC_oxred_C"/>
    <property type="match status" value="1"/>
</dbReference>
<dbReference type="Pfam" id="PF00732">
    <property type="entry name" value="GMC_oxred_N"/>
    <property type="match status" value="1"/>
</dbReference>
<dbReference type="PIRSF" id="PIRSF000137">
    <property type="entry name" value="Alcohol_oxidase"/>
    <property type="match status" value="1"/>
</dbReference>
<dbReference type="SUPFAM" id="SSF54373">
    <property type="entry name" value="FAD-linked reductases, C-terminal domain"/>
    <property type="match status" value="1"/>
</dbReference>
<dbReference type="SUPFAM" id="SSF51905">
    <property type="entry name" value="FAD/NAD(P)-binding domain"/>
    <property type="match status" value="1"/>
</dbReference>
<dbReference type="PROSITE" id="PS00623">
    <property type="entry name" value="GMC_OXRED_1"/>
    <property type="match status" value="1"/>
</dbReference>
<dbReference type="PROSITE" id="PS00624">
    <property type="entry name" value="GMC_OXRED_2"/>
    <property type="match status" value="1"/>
</dbReference>
<feature type="chain" id="PRO_1000133329" description="Oxygen-dependent choline dehydrogenase">
    <location>
        <begin position="1"/>
        <end position="556"/>
    </location>
</feature>
<feature type="active site" description="Proton acceptor" evidence="1">
    <location>
        <position position="473"/>
    </location>
</feature>
<feature type="binding site" evidence="1">
    <location>
        <begin position="4"/>
        <end position="33"/>
    </location>
    <ligand>
        <name>FAD</name>
        <dbReference type="ChEBI" id="CHEBI:57692"/>
    </ligand>
</feature>
<protein>
    <recommendedName>
        <fullName evidence="1">Oxygen-dependent choline dehydrogenase</fullName>
        <shortName evidence="1">CDH</shortName>
        <shortName evidence="1">CHD</shortName>
        <ecNumber evidence="1">1.1.99.1</ecNumber>
    </recommendedName>
    <alternativeName>
        <fullName evidence="1">Betaine aldehyde dehydrogenase</fullName>
        <shortName evidence="1">BADH</shortName>
        <ecNumber evidence="1">1.2.1.8</ecNumber>
    </alternativeName>
</protein>